<organism>
    <name type="scientific">Burkholderia pseudomallei (strain K96243)</name>
    <dbReference type="NCBI Taxonomy" id="272560"/>
    <lineage>
        <taxon>Bacteria</taxon>
        <taxon>Pseudomonadati</taxon>
        <taxon>Pseudomonadota</taxon>
        <taxon>Betaproteobacteria</taxon>
        <taxon>Burkholderiales</taxon>
        <taxon>Burkholderiaceae</taxon>
        <taxon>Burkholderia</taxon>
        <taxon>pseudomallei group</taxon>
    </lineage>
</organism>
<sequence length="325" mass="35685">MQTSLLKPKIIAVESLGENHAKVVMEPFERGYGHTLGNALRRVLLSSMVGYAPTEVTIAGVVHEYSTLDGVQEDVVNLLLNLKGVVFKLHNRDEVTVTLRKEGEGVVTAGDIELAHDCEVINPNHVIAHLSKGGKLDVQIKVEKGRGYVPGNVRRYGDETAKIIGRIVLDASFSPVRRVSYTVESARVEQRTDLDKLVMNIETSGVITPEEAIRQSARILVDQLSVFAALEGTETAAEAPSRAPQIDPILLRPVDDLELTVRSANCLKAENIYYIGDLIQRTENELLKTPNLGRKSLNEIKEVLASRGLTLGMKLENWPPAGLDK</sequence>
<keyword id="KW-0240">DNA-directed RNA polymerase</keyword>
<keyword id="KW-0548">Nucleotidyltransferase</keyword>
<keyword id="KW-1185">Reference proteome</keyword>
<keyword id="KW-0804">Transcription</keyword>
<keyword id="KW-0808">Transferase</keyword>
<accession>Q63Q37</accession>
<dbReference type="EC" id="2.7.7.6" evidence="1"/>
<dbReference type="EMBL" id="BX571965">
    <property type="protein sequence ID" value="CAH37198.1"/>
    <property type="molecule type" value="Genomic_DNA"/>
</dbReference>
<dbReference type="RefSeq" id="WP_004197925.1">
    <property type="nucleotide sequence ID" value="NZ_CP009538.1"/>
</dbReference>
<dbReference type="RefSeq" id="YP_109781.1">
    <property type="nucleotide sequence ID" value="NC_006350.1"/>
</dbReference>
<dbReference type="SMR" id="Q63Q37"/>
<dbReference type="STRING" id="272560.BPSL3187"/>
<dbReference type="GeneID" id="93061806"/>
<dbReference type="KEGG" id="bps:BPSL3187"/>
<dbReference type="PATRIC" id="fig|272560.51.peg.2051"/>
<dbReference type="eggNOG" id="COG0202">
    <property type="taxonomic scope" value="Bacteria"/>
</dbReference>
<dbReference type="Proteomes" id="UP000000605">
    <property type="component" value="Chromosome 1"/>
</dbReference>
<dbReference type="GO" id="GO:0005737">
    <property type="term" value="C:cytoplasm"/>
    <property type="evidence" value="ECO:0007669"/>
    <property type="project" value="UniProtKB-ARBA"/>
</dbReference>
<dbReference type="GO" id="GO:0000428">
    <property type="term" value="C:DNA-directed RNA polymerase complex"/>
    <property type="evidence" value="ECO:0007669"/>
    <property type="project" value="UniProtKB-KW"/>
</dbReference>
<dbReference type="GO" id="GO:0003677">
    <property type="term" value="F:DNA binding"/>
    <property type="evidence" value="ECO:0007669"/>
    <property type="project" value="UniProtKB-UniRule"/>
</dbReference>
<dbReference type="GO" id="GO:0003899">
    <property type="term" value="F:DNA-directed RNA polymerase activity"/>
    <property type="evidence" value="ECO:0007669"/>
    <property type="project" value="UniProtKB-UniRule"/>
</dbReference>
<dbReference type="GO" id="GO:0046983">
    <property type="term" value="F:protein dimerization activity"/>
    <property type="evidence" value="ECO:0007669"/>
    <property type="project" value="InterPro"/>
</dbReference>
<dbReference type="GO" id="GO:0006351">
    <property type="term" value="P:DNA-templated transcription"/>
    <property type="evidence" value="ECO:0007669"/>
    <property type="project" value="UniProtKB-UniRule"/>
</dbReference>
<dbReference type="CDD" id="cd06928">
    <property type="entry name" value="RNAP_alpha_NTD"/>
    <property type="match status" value="1"/>
</dbReference>
<dbReference type="FunFam" id="1.10.150.20:FF:000001">
    <property type="entry name" value="DNA-directed RNA polymerase subunit alpha"/>
    <property type="match status" value="1"/>
</dbReference>
<dbReference type="FunFam" id="2.170.120.12:FF:000001">
    <property type="entry name" value="DNA-directed RNA polymerase subunit alpha"/>
    <property type="match status" value="1"/>
</dbReference>
<dbReference type="Gene3D" id="1.10.150.20">
    <property type="entry name" value="5' to 3' exonuclease, C-terminal subdomain"/>
    <property type="match status" value="1"/>
</dbReference>
<dbReference type="Gene3D" id="2.170.120.12">
    <property type="entry name" value="DNA-directed RNA polymerase, insert domain"/>
    <property type="match status" value="1"/>
</dbReference>
<dbReference type="Gene3D" id="3.30.1360.10">
    <property type="entry name" value="RNA polymerase, RBP11-like subunit"/>
    <property type="match status" value="1"/>
</dbReference>
<dbReference type="HAMAP" id="MF_00059">
    <property type="entry name" value="RNApol_bact_RpoA"/>
    <property type="match status" value="1"/>
</dbReference>
<dbReference type="InterPro" id="IPR011262">
    <property type="entry name" value="DNA-dir_RNA_pol_insert"/>
</dbReference>
<dbReference type="InterPro" id="IPR011263">
    <property type="entry name" value="DNA-dir_RNA_pol_RpoA/D/Rpb3"/>
</dbReference>
<dbReference type="InterPro" id="IPR011773">
    <property type="entry name" value="DNA-dir_RpoA"/>
</dbReference>
<dbReference type="InterPro" id="IPR036603">
    <property type="entry name" value="RBP11-like"/>
</dbReference>
<dbReference type="InterPro" id="IPR011260">
    <property type="entry name" value="RNAP_asu_C"/>
</dbReference>
<dbReference type="InterPro" id="IPR036643">
    <property type="entry name" value="RNApol_insert_sf"/>
</dbReference>
<dbReference type="NCBIfam" id="NF003513">
    <property type="entry name" value="PRK05182.1-2"/>
    <property type="match status" value="1"/>
</dbReference>
<dbReference type="NCBIfam" id="NF003519">
    <property type="entry name" value="PRK05182.2-5"/>
    <property type="match status" value="1"/>
</dbReference>
<dbReference type="NCBIfam" id="TIGR02027">
    <property type="entry name" value="rpoA"/>
    <property type="match status" value="1"/>
</dbReference>
<dbReference type="Pfam" id="PF01000">
    <property type="entry name" value="RNA_pol_A_bac"/>
    <property type="match status" value="1"/>
</dbReference>
<dbReference type="Pfam" id="PF03118">
    <property type="entry name" value="RNA_pol_A_CTD"/>
    <property type="match status" value="1"/>
</dbReference>
<dbReference type="Pfam" id="PF01193">
    <property type="entry name" value="RNA_pol_L"/>
    <property type="match status" value="1"/>
</dbReference>
<dbReference type="SMART" id="SM00662">
    <property type="entry name" value="RPOLD"/>
    <property type="match status" value="1"/>
</dbReference>
<dbReference type="SUPFAM" id="SSF47789">
    <property type="entry name" value="C-terminal domain of RNA polymerase alpha subunit"/>
    <property type="match status" value="1"/>
</dbReference>
<dbReference type="SUPFAM" id="SSF56553">
    <property type="entry name" value="Insert subdomain of RNA polymerase alpha subunit"/>
    <property type="match status" value="1"/>
</dbReference>
<dbReference type="SUPFAM" id="SSF55257">
    <property type="entry name" value="RBP11-like subunits of RNA polymerase"/>
    <property type="match status" value="1"/>
</dbReference>
<comment type="function">
    <text evidence="1">DNA-dependent RNA polymerase catalyzes the transcription of DNA into RNA using the four ribonucleoside triphosphates as substrates.</text>
</comment>
<comment type="catalytic activity">
    <reaction evidence="1">
        <text>RNA(n) + a ribonucleoside 5'-triphosphate = RNA(n+1) + diphosphate</text>
        <dbReference type="Rhea" id="RHEA:21248"/>
        <dbReference type="Rhea" id="RHEA-COMP:14527"/>
        <dbReference type="Rhea" id="RHEA-COMP:17342"/>
        <dbReference type="ChEBI" id="CHEBI:33019"/>
        <dbReference type="ChEBI" id="CHEBI:61557"/>
        <dbReference type="ChEBI" id="CHEBI:140395"/>
        <dbReference type="EC" id="2.7.7.6"/>
    </reaction>
</comment>
<comment type="subunit">
    <text evidence="1">Homodimer. The RNAP catalytic core consists of 2 alpha, 1 beta, 1 beta' and 1 omega subunit. When a sigma factor is associated with the core the holoenzyme is formed, which can initiate transcription.</text>
</comment>
<comment type="domain">
    <text evidence="1">The N-terminal domain is essential for RNAP assembly and basal transcription, whereas the C-terminal domain is involved in interaction with transcriptional regulators and with upstream promoter elements.</text>
</comment>
<comment type="similarity">
    <text evidence="1">Belongs to the RNA polymerase alpha chain family.</text>
</comment>
<feature type="chain" id="PRO_0000175283" description="DNA-directed RNA polymerase subunit alpha">
    <location>
        <begin position="1"/>
        <end position="325"/>
    </location>
</feature>
<feature type="region of interest" description="Alpha N-terminal domain (alpha-NTD)" evidence="1">
    <location>
        <begin position="1"/>
        <end position="231"/>
    </location>
</feature>
<feature type="region of interest" description="Alpha C-terminal domain (alpha-CTD)" evidence="1">
    <location>
        <begin position="246"/>
        <end position="325"/>
    </location>
</feature>
<reference key="1">
    <citation type="journal article" date="2004" name="Proc. Natl. Acad. Sci. U.S.A.">
        <title>Genomic plasticity of the causative agent of melioidosis, Burkholderia pseudomallei.</title>
        <authorList>
            <person name="Holden M.T.G."/>
            <person name="Titball R.W."/>
            <person name="Peacock S.J."/>
            <person name="Cerdeno-Tarraga A.-M."/>
            <person name="Atkins T."/>
            <person name="Crossman L.C."/>
            <person name="Pitt T."/>
            <person name="Churcher C."/>
            <person name="Mungall K.L."/>
            <person name="Bentley S.D."/>
            <person name="Sebaihia M."/>
            <person name="Thomson N.R."/>
            <person name="Bason N."/>
            <person name="Beacham I.R."/>
            <person name="Brooks K."/>
            <person name="Brown K.A."/>
            <person name="Brown N.F."/>
            <person name="Challis G.L."/>
            <person name="Cherevach I."/>
            <person name="Chillingworth T."/>
            <person name="Cronin A."/>
            <person name="Crossett B."/>
            <person name="Davis P."/>
            <person name="DeShazer D."/>
            <person name="Feltwell T."/>
            <person name="Fraser A."/>
            <person name="Hance Z."/>
            <person name="Hauser H."/>
            <person name="Holroyd S."/>
            <person name="Jagels K."/>
            <person name="Keith K.E."/>
            <person name="Maddison M."/>
            <person name="Moule S."/>
            <person name="Price C."/>
            <person name="Quail M.A."/>
            <person name="Rabbinowitsch E."/>
            <person name="Rutherford K."/>
            <person name="Sanders M."/>
            <person name="Simmonds M."/>
            <person name="Songsivilai S."/>
            <person name="Stevens K."/>
            <person name="Tumapa S."/>
            <person name="Vesaratchavest M."/>
            <person name="Whitehead S."/>
            <person name="Yeats C."/>
            <person name="Barrell B.G."/>
            <person name="Oyston P.C.F."/>
            <person name="Parkhill J."/>
        </authorList>
    </citation>
    <scope>NUCLEOTIDE SEQUENCE [LARGE SCALE GENOMIC DNA]</scope>
    <source>
        <strain>K96243</strain>
    </source>
</reference>
<gene>
    <name evidence="1" type="primary">rpoA</name>
    <name type="ordered locus">BPSL3187</name>
</gene>
<proteinExistence type="inferred from homology"/>
<name>RPOA_BURPS</name>
<evidence type="ECO:0000255" key="1">
    <source>
        <dbReference type="HAMAP-Rule" id="MF_00059"/>
    </source>
</evidence>
<protein>
    <recommendedName>
        <fullName evidence="1">DNA-directed RNA polymerase subunit alpha</fullName>
        <shortName evidence="1">RNAP subunit alpha</shortName>
        <ecNumber evidence="1">2.7.7.6</ecNumber>
    </recommendedName>
    <alternativeName>
        <fullName evidence="1">RNA polymerase subunit alpha</fullName>
    </alternativeName>
    <alternativeName>
        <fullName evidence="1">Transcriptase subunit alpha</fullName>
    </alternativeName>
</protein>